<comment type="function">
    <text evidence="1">Serum albumin, the main protein of plasma, has a good binding capacity for water, Ca(2+), Na(+), K(+), fatty acids, hormones, bilirubin and drugs. Its main function is the regulation of the colloidal osmotic pressure of blood.</text>
</comment>
<comment type="subcellular location">
    <subcellularLocation>
        <location>Secreted</location>
    </subcellularLocation>
</comment>
<comment type="tissue specificity">
    <text>Plasma.</text>
</comment>
<comment type="similarity">
    <text evidence="3">Belongs to the ALB/AFP/VDB family.</text>
</comment>
<protein>
    <recommendedName>
        <fullName>Albumin</fullName>
    </recommendedName>
</protein>
<keyword id="KW-0106">Calcium</keyword>
<keyword id="KW-1015">Disulfide bond</keyword>
<keyword id="KW-0446">Lipid-binding</keyword>
<keyword id="KW-0479">Metal-binding</keyword>
<keyword id="KW-0677">Repeat</keyword>
<keyword id="KW-0964">Secreted</keyword>
<keyword id="KW-0862">Zinc</keyword>
<proteinExistence type="evidence at transcript level"/>
<name>ALBU_AQUCT</name>
<gene>
    <name type="primary">ALB</name>
</gene>
<reference key="1">
    <citation type="journal article" date="1990" name="Mol. Endocrinol.">
        <title>Cloning and thyroid hormone regulation of albumin mRNA in Rana catesbeiana tadpole liver.</title>
        <authorList>
            <person name="Averyhart-Fullard V."/>
            <person name="Jaffe R.C."/>
        </authorList>
    </citation>
    <scope>NUCLEOTIDE SEQUENCE [MRNA]</scope>
    <source>
        <tissue>Tadpole liver</tissue>
    </source>
</reference>
<feature type="chain" id="PRO_0000135615" description="Albumin">
    <location>
        <begin position="1" status="less than"/>
        <end position="382"/>
    </location>
</feature>
<feature type="domain" description="Albumin 2" evidence="3">
    <location>
        <begin position="1" status="less than"/>
        <end position="178"/>
    </location>
</feature>
<feature type="domain" description="Albumin 3" evidence="3">
    <location>
        <begin position="179"/>
        <end position="377"/>
    </location>
</feature>
<feature type="binding site" evidence="2">
    <location>
        <position position="51"/>
    </location>
    <ligand>
        <name>Ca(2+)</name>
        <dbReference type="ChEBI" id="CHEBI:29108"/>
        <label>1</label>
    </ligand>
</feature>
<feature type="binding site" evidence="1">
    <location>
        <position position="51"/>
    </location>
    <ligand>
        <name>Zn(2+)</name>
        <dbReference type="ChEBI" id="CHEBI:29105"/>
    </ligand>
</feature>
<feature type="binding site" evidence="2">
    <location>
        <position position="54"/>
    </location>
    <ligand>
        <name>Ca(2+)</name>
        <dbReference type="ChEBI" id="CHEBI:29108"/>
        <label>1</label>
    </ligand>
</feature>
<feature type="disulfide bond" evidence="3">
    <location>
        <begin position="2"/>
        <end position="48"/>
    </location>
</feature>
<feature type="disulfide bond" evidence="3">
    <location>
        <begin position="47"/>
        <end position="55"/>
    </location>
</feature>
<feature type="disulfide bond" evidence="3">
    <location>
        <begin position="67"/>
        <end position="81"/>
    </location>
</feature>
<feature type="disulfide bond" evidence="3">
    <location>
        <begin position="80"/>
        <end position="91"/>
    </location>
</feature>
<feature type="disulfide bond" evidence="3">
    <location>
        <begin position="116"/>
        <end position="161"/>
    </location>
</feature>
<feature type="disulfide bond" evidence="3">
    <location>
        <begin position="160"/>
        <end position="169"/>
    </location>
</feature>
<feature type="disulfide bond" evidence="3">
    <location>
        <begin position="192"/>
        <end position="238"/>
    </location>
</feature>
<feature type="disulfide bond" evidence="3">
    <location>
        <begin position="237"/>
        <end position="248"/>
    </location>
</feature>
<feature type="disulfide bond" evidence="3">
    <location>
        <begin position="261"/>
        <end position="277"/>
    </location>
</feature>
<feature type="disulfide bond" evidence="3">
    <location>
        <begin position="276"/>
        <end position="287"/>
    </location>
</feature>
<feature type="disulfide bond" evidence="3">
    <location>
        <begin position="314"/>
        <end position="359"/>
    </location>
</feature>
<feature type="disulfide bond" evidence="3">
    <location>
        <begin position="358"/>
        <end position="367"/>
    </location>
</feature>
<feature type="non-terminal residue">
    <location>
        <position position="1"/>
    </location>
</feature>
<dbReference type="EMBL" id="M38195">
    <property type="protein sequence ID" value="AAA63473.1"/>
    <property type="molecule type" value="mRNA"/>
</dbReference>
<dbReference type="PIR" id="A37253">
    <property type="entry name" value="A37253"/>
</dbReference>
<dbReference type="SMR" id="P21847"/>
<dbReference type="GO" id="GO:0072562">
    <property type="term" value="C:blood microparticle"/>
    <property type="evidence" value="ECO:0007669"/>
    <property type="project" value="TreeGrafter"/>
</dbReference>
<dbReference type="GO" id="GO:0005737">
    <property type="term" value="C:cytoplasm"/>
    <property type="evidence" value="ECO:0007669"/>
    <property type="project" value="TreeGrafter"/>
</dbReference>
<dbReference type="GO" id="GO:0005615">
    <property type="term" value="C:extracellular space"/>
    <property type="evidence" value="ECO:0000314"/>
    <property type="project" value="AgBase"/>
</dbReference>
<dbReference type="GO" id="GO:0008289">
    <property type="term" value="F:lipid binding"/>
    <property type="evidence" value="ECO:0007669"/>
    <property type="project" value="UniProtKB-KW"/>
</dbReference>
<dbReference type="GO" id="GO:0046872">
    <property type="term" value="F:metal ion binding"/>
    <property type="evidence" value="ECO:0007669"/>
    <property type="project" value="UniProtKB-KW"/>
</dbReference>
<dbReference type="GO" id="GO:0036094">
    <property type="term" value="F:small molecule binding"/>
    <property type="evidence" value="ECO:0000353"/>
    <property type="project" value="AgBase"/>
</dbReference>
<dbReference type="GO" id="GO:0070324">
    <property type="term" value="F:thyroid hormone binding"/>
    <property type="evidence" value="ECO:0000304"/>
    <property type="project" value="AgBase"/>
</dbReference>
<dbReference type="CDD" id="cd00015">
    <property type="entry name" value="ALBUMIN"/>
    <property type="match status" value="2"/>
</dbReference>
<dbReference type="FunFam" id="1.10.246.10:FF:000002">
    <property type="entry name" value="Serum albumin"/>
    <property type="match status" value="1"/>
</dbReference>
<dbReference type="Gene3D" id="1.10.246.10">
    <property type="match status" value="4"/>
</dbReference>
<dbReference type="InterPro" id="IPR000264">
    <property type="entry name" value="ALB/AFP/VDB"/>
</dbReference>
<dbReference type="InterPro" id="IPR020858">
    <property type="entry name" value="Serum_albumin-like"/>
</dbReference>
<dbReference type="InterPro" id="IPR020857">
    <property type="entry name" value="Serum_albumin_CS"/>
</dbReference>
<dbReference type="InterPro" id="IPR014760">
    <property type="entry name" value="Serum_albumin_N"/>
</dbReference>
<dbReference type="PANTHER" id="PTHR11385:SF14">
    <property type="entry name" value="AFAMIN"/>
    <property type="match status" value="1"/>
</dbReference>
<dbReference type="PANTHER" id="PTHR11385">
    <property type="entry name" value="SERUM ALBUMIN-RELATED"/>
    <property type="match status" value="1"/>
</dbReference>
<dbReference type="Pfam" id="PF00273">
    <property type="entry name" value="Serum_albumin"/>
    <property type="match status" value="2"/>
</dbReference>
<dbReference type="PRINTS" id="PR00802">
    <property type="entry name" value="SERUMALBUMIN"/>
</dbReference>
<dbReference type="SMART" id="SM00103">
    <property type="entry name" value="ALBUMIN"/>
    <property type="match status" value="2"/>
</dbReference>
<dbReference type="SUPFAM" id="SSF48552">
    <property type="entry name" value="Serum albumin-like"/>
    <property type="match status" value="2"/>
</dbReference>
<dbReference type="PROSITE" id="PS00212">
    <property type="entry name" value="ALBUMIN_1"/>
    <property type="match status" value="2"/>
</dbReference>
<dbReference type="PROSITE" id="PS51438">
    <property type="entry name" value="ALBUMIN_2"/>
    <property type="match status" value="2"/>
</dbReference>
<organism>
    <name type="scientific">Aquarana catesbeiana</name>
    <name type="common">American bullfrog</name>
    <name type="synonym">Rana catesbeiana</name>
    <dbReference type="NCBI Taxonomy" id="8400"/>
    <lineage>
        <taxon>Eukaryota</taxon>
        <taxon>Metazoa</taxon>
        <taxon>Chordata</taxon>
        <taxon>Craniata</taxon>
        <taxon>Vertebrata</taxon>
        <taxon>Euteleostomi</taxon>
        <taxon>Amphibia</taxon>
        <taxon>Batrachia</taxon>
        <taxon>Anura</taxon>
        <taxon>Neobatrachia</taxon>
        <taxon>Ranoidea</taxon>
        <taxon>Ranidae</taxon>
        <taxon>Aquarana</taxon>
    </lineage>
</organism>
<evidence type="ECO:0000250" key="1">
    <source>
        <dbReference type="UniProtKB" id="P02768"/>
    </source>
</evidence>
<evidence type="ECO:0000250" key="2">
    <source>
        <dbReference type="UniProtKB" id="P02769"/>
    </source>
</evidence>
<evidence type="ECO:0000255" key="3">
    <source>
        <dbReference type="PROSITE-ProRule" id="PRU00769"/>
    </source>
</evidence>
<sequence>KCRIIREFPDIVFKGLTLVQVSQKFGKAGFEDVKKVTEEIVHLNEDCCKGDAVECMMERMEATDHICEAKDKLSSKLADCCAKSILERTPCLLALPNDESDLSKELKNYYEDERVCENYKKDKLLFLAHFTHDYARSHQESSPQSCLRVSKGFEGLLEKCCASENHAECLKQAPILLEAALKEIEELRKQNCGALQLLGFRDYNIQLLFRYFFKMPQVTAPTLVELAGRMTKVAVYCCGLAENKQQTCAEEKLDILLGEMCEKEKHTFVNDNVRHCCVDSYANRRKCFTDLQRYPNYVAPKWDESKLHFNEDLCKGSEDDQIKKKLEVLVEYMKMKPDCGPEKLKEVVEAFRKIDIKCCAAEDHQKCFDDEKAGLLQIIEAH</sequence>
<accession>P21847</accession>